<protein>
    <recommendedName>
        <fullName evidence="1">Imidazole glycerol phosphate synthase subunit HisF</fullName>
        <ecNumber evidence="1">4.3.2.10</ecNumber>
    </recommendedName>
    <alternativeName>
        <fullName evidence="1">IGP synthase cyclase subunit</fullName>
    </alternativeName>
    <alternativeName>
        <fullName evidence="1">IGP synthase subunit HisF</fullName>
    </alternativeName>
    <alternativeName>
        <fullName evidence="1">ImGP synthase subunit HisF</fullName>
        <shortName evidence="1">IGPS subunit HisF</shortName>
    </alternativeName>
</protein>
<dbReference type="EC" id="4.3.2.10" evidence="1"/>
<dbReference type="EMBL" id="CP000254">
    <property type="protein sequence ID" value="ABD40707.1"/>
    <property type="molecule type" value="Genomic_DNA"/>
</dbReference>
<dbReference type="RefSeq" id="WP_011447986.1">
    <property type="nucleotide sequence ID" value="NC_007796.1"/>
</dbReference>
<dbReference type="SMR" id="Q2FPV1"/>
<dbReference type="FunCoup" id="Q2FPV1">
    <property type="interactions" value="189"/>
</dbReference>
<dbReference type="STRING" id="323259.Mhun_0957"/>
<dbReference type="EnsemblBacteria" id="ABD40707">
    <property type="protein sequence ID" value="ABD40707"/>
    <property type="gene ID" value="Mhun_0957"/>
</dbReference>
<dbReference type="GeneID" id="3923239"/>
<dbReference type="KEGG" id="mhu:Mhun_0957"/>
<dbReference type="eggNOG" id="arCOG00617">
    <property type="taxonomic scope" value="Archaea"/>
</dbReference>
<dbReference type="HOGENOM" id="CLU_048577_4_0_2"/>
<dbReference type="InParanoid" id="Q2FPV1"/>
<dbReference type="OrthoDB" id="6261at2157"/>
<dbReference type="UniPathway" id="UPA00031">
    <property type="reaction ID" value="UER00010"/>
</dbReference>
<dbReference type="Proteomes" id="UP000001941">
    <property type="component" value="Chromosome"/>
</dbReference>
<dbReference type="GO" id="GO:0005737">
    <property type="term" value="C:cytoplasm"/>
    <property type="evidence" value="ECO:0007669"/>
    <property type="project" value="UniProtKB-SubCell"/>
</dbReference>
<dbReference type="GO" id="GO:0000107">
    <property type="term" value="F:imidazoleglycerol-phosphate synthase activity"/>
    <property type="evidence" value="ECO:0007669"/>
    <property type="project" value="UniProtKB-UniRule"/>
</dbReference>
<dbReference type="GO" id="GO:0016829">
    <property type="term" value="F:lyase activity"/>
    <property type="evidence" value="ECO:0007669"/>
    <property type="project" value="UniProtKB-KW"/>
</dbReference>
<dbReference type="GO" id="GO:0000105">
    <property type="term" value="P:L-histidine biosynthetic process"/>
    <property type="evidence" value="ECO:0007669"/>
    <property type="project" value="UniProtKB-UniRule"/>
</dbReference>
<dbReference type="CDD" id="cd04731">
    <property type="entry name" value="HisF"/>
    <property type="match status" value="1"/>
</dbReference>
<dbReference type="FunFam" id="3.20.20.70:FF:000006">
    <property type="entry name" value="Imidazole glycerol phosphate synthase subunit HisF"/>
    <property type="match status" value="1"/>
</dbReference>
<dbReference type="Gene3D" id="3.20.20.70">
    <property type="entry name" value="Aldolase class I"/>
    <property type="match status" value="1"/>
</dbReference>
<dbReference type="HAMAP" id="MF_01013">
    <property type="entry name" value="HisF"/>
    <property type="match status" value="1"/>
</dbReference>
<dbReference type="InterPro" id="IPR013785">
    <property type="entry name" value="Aldolase_TIM"/>
</dbReference>
<dbReference type="InterPro" id="IPR006062">
    <property type="entry name" value="His_biosynth"/>
</dbReference>
<dbReference type="InterPro" id="IPR004651">
    <property type="entry name" value="HisF"/>
</dbReference>
<dbReference type="InterPro" id="IPR050064">
    <property type="entry name" value="IGPS_HisA/HisF"/>
</dbReference>
<dbReference type="InterPro" id="IPR011060">
    <property type="entry name" value="RibuloseP-bd_barrel"/>
</dbReference>
<dbReference type="NCBIfam" id="TIGR00735">
    <property type="entry name" value="hisF"/>
    <property type="match status" value="1"/>
</dbReference>
<dbReference type="PANTHER" id="PTHR21235:SF2">
    <property type="entry name" value="IMIDAZOLE GLYCEROL PHOSPHATE SYNTHASE HISHF"/>
    <property type="match status" value="1"/>
</dbReference>
<dbReference type="PANTHER" id="PTHR21235">
    <property type="entry name" value="IMIDAZOLE GLYCEROL PHOSPHATE SYNTHASE SUBUNIT HISF/H IGP SYNTHASE SUBUNIT HISF/H"/>
    <property type="match status" value="1"/>
</dbReference>
<dbReference type="Pfam" id="PF00977">
    <property type="entry name" value="His_biosynth"/>
    <property type="match status" value="1"/>
</dbReference>
<dbReference type="SUPFAM" id="SSF51366">
    <property type="entry name" value="Ribulose-phoshate binding barrel"/>
    <property type="match status" value="1"/>
</dbReference>
<evidence type="ECO:0000255" key="1">
    <source>
        <dbReference type="HAMAP-Rule" id="MF_01013"/>
    </source>
</evidence>
<name>HIS6_METHJ</name>
<sequence>MTLTRRIIPCLDIKDGRVVKGTNFLGLRDAGDPVELACRYNEQGADEVVFLDITASRENRGMIIDVIQRAADELFLPLTVGGGIRTLDDVQKTLRAGADKVSINTSAVQNPALISEAAQAFGTQCVVVAIDVKRRTSPEPGKTMIPLPDQSSCWYEVVTHGGSQPTGIDAIAWAKEAENRGAGEILLTSMETDGTKEGFDIPITSAISESVGIPVIASGGVGTFDHFYEGFVYGKADAALAASVFHYGEMTIADVKDYLSKKGIAIRPHTQ</sequence>
<organism>
    <name type="scientific">Methanospirillum hungatei JF-1 (strain ATCC 27890 / DSM 864 / NBRC 100397 / JF-1)</name>
    <dbReference type="NCBI Taxonomy" id="323259"/>
    <lineage>
        <taxon>Archaea</taxon>
        <taxon>Methanobacteriati</taxon>
        <taxon>Methanobacteriota</taxon>
        <taxon>Stenosarchaea group</taxon>
        <taxon>Methanomicrobia</taxon>
        <taxon>Methanomicrobiales</taxon>
        <taxon>Methanospirillaceae</taxon>
        <taxon>Methanospirillum</taxon>
    </lineage>
</organism>
<comment type="function">
    <text evidence="1">IGPS catalyzes the conversion of PRFAR and glutamine to IGP, AICAR and glutamate. The HisF subunit catalyzes the cyclization activity that produces IGP and AICAR from PRFAR using the ammonia provided by the HisH subunit.</text>
</comment>
<comment type="catalytic activity">
    <reaction evidence="1">
        <text>5-[(5-phospho-1-deoxy-D-ribulos-1-ylimino)methylamino]-1-(5-phospho-beta-D-ribosyl)imidazole-4-carboxamide + L-glutamine = D-erythro-1-(imidazol-4-yl)glycerol 3-phosphate + 5-amino-1-(5-phospho-beta-D-ribosyl)imidazole-4-carboxamide + L-glutamate + H(+)</text>
        <dbReference type="Rhea" id="RHEA:24793"/>
        <dbReference type="ChEBI" id="CHEBI:15378"/>
        <dbReference type="ChEBI" id="CHEBI:29985"/>
        <dbReference type="ChEBI" id="CHEBI:58278"/>
        <dbReference type="ChEBI" id="CHEBI:58359"/>
        <dbReference type="ChEBI" id="CHEBI:58475"/>
        <dbReference type="ChEBI" id="CHEBI:58525"/>
        <dbReference type="EC" id="4.3.2.10"/>
    </reaction>
</comment>
<comment type="pathway">
    <text evidence="1">Amino-acid biosynthesis; L-histidine biosynthesis; L-histidine from 5-phospho-alpha-D-ribose 1-diphosphate: step 5/9.</text>
</comment>
<comment type="subunit">
    <text evidence="1">Heterodimer of HisH and HisF.</text>
</comment>
<comment type="subcellular location">
    <subcellularLocation>
        <location evidence="1">Cytoplasm</location>
    </subcellularLocation>
</comment>
<comment type="similarity">
    <text evidence="1">Belongs to the HisA/HisF family.</text>
</comment>
<keyword id="KW-0028">Amino-acid biosynthesis</keyword>
<keyword id="KW-0963">Cytoplasm</keyword>
<keyword id="KW-0368">Histidine biosynthesis</keyword>
<keyword id="KW-0456">Lyase</keyword>
<keyword id="KW-1185">Reference proteome</keyword>
<accession>Q2FPV1</accession>
<proteinExistence type="inferred from homology"/>
<feature type="chain" id="PRO_0000319466" description="Imidazole glycerol phosphate synthase subunit HisF">
    <location>
        <begin position="1"/>
        <end position="271"/>
    </location>
</feature>
<feature type="active site" evidence="1">
    <location>
        <position position="12"/>
    </location>
</feature>
<feature type="active site" evidence="1">
    <location>
        <position position="131"/>
    </location>
</feature>
<reference key="1">
    <citation type="journal article" date="2016" name="Stand. Genomic Sci.">
        <title>Complete genome sequence of Methanospirillum hungatei type strain JF1.</title>
        <authorList>
            <person name="Gunsalus R.P."/>
            <person name="Cook L.E."/>
            <person name="Crable B."/>
            <person name="Rohlin L."/>
            <person name="McDonald E."/>
            <person name="Mouttaki H."/>
            <person name="Sieber J.R."/>
            <person name="Poweleit N."/>
            <person name="Zhou H."/>
            <person name="Lapidus A.L."/>
            <person name="Daligault H.E."/>
            <person name="Land M."/>
            <person name="Gilna P."/>
            <person name="Ivanova N."/>
            <person name="Kyrpides N."/>
            <person name="Culley D.E."/>
            <person name="McInerney M.J."/>
        </authorList>
    </citation>
    <scope>NUCLEOTIDE SEQUENCE [LARGE SCALE GENOMIC DNA]</scope>
    <source>
        <strain>ATCC 27890 / DSM 864 / NBRC 100397 / JF-1</strain>
    </source>
</reference>
<gene>
    <name evidence="1" type="primary">hisF</name>
    <name type="ordered locus">Mhun_0957</name>
</gene>